<organism>
    <name type="scientific">Synechococcus sp. (strain JA-3-3Ab)</name>
    <name type="common">Cyanobacteria bacterium Yellowstone A-Prime</name>
    <dbReference type="NCBI Taxonomy" id="321327"/>
    <lineage>
        <taxon>Bacteria</taxon>
        <taxon>Bacillati</taxon>
        <taxon>Cyanobacteriota</taxon>
        <taxon>Cyanophyceae</taxon>
        <taxon>Synechococcales</taxon>
        <taxon>Synechococcaceae</taxon>
        <taxon>Synechococcus</taxon>
    </lineage>
</organism>
<reference key="1">
    <citation type="journal article" date="2007" name="ISME J.">
        <title>Population level functional diversity in a microbial community revealed by comparative genomic and metagenomic analyses.</title>
        <authorList>
            <person name="Bhaya D."/>
            <person name="Grossman A.R."/>
            <person name="Steunou A.-S."/>
            <person name="Khuri N."/>
            <person name="Cohan F.M."/>
            <person name="Hamamura N."/>
            <person name="Melendrez M.C."/>
            <person name="Bateson M.M."/>
            <person name="Ward D.M."/>
            <person name="Heidelberg J.F."/>
        </authorList>
    </citation>
    <scope>NUCLEOTIDE SEQUENCE [LARGE SCALE GENOMIC DNA]</scope>
    <source>
        <strain>JA-3-3Ab</strain>
    </source>
</reference>
<name>ACP_SYNJA</name>
<accession>Q2JQZ8</accession>
<sequence length="81" mass="8941">MSADEVYSRVRKIVSDQLGVEDDKVTLEANFQNDLGADSLDTVELVMAFEEEFDLEIPDEDAEGIATVQDAVNYILSKKAA</sequence>
<protein>
    <recommendedName>
        <fullName evidence="1">Acyl carrier protein</fullName>
        <shortName evidence="1">ACP</shortName>
    </recommendedName>
</protein>
<comment type="function">
    <text evidence="1">Carrier of the growing fatty acid chain in fatty acid biosynthesis.</text>
</comment>
<comment type="pathway">
    <text evidence="1">Lipid metabolism; fatty acid biosynthesis.</text>
</comment>
<comment type="subcellular location">
    <subcellularLocation>
        <location evidence="1">Cytoplasm</location>
    </subcellularLocation>
</comment>
<comment type="PTM">
    <text evidence="1">4'-phosphopantetheine is transferred from CoA to a specific serine of apo-ACP by AcpS. This modification is essential for activity because fatty acids are bound in thioester linkage to the sulfhydryl of the prosthetic group.</text>
</comment>
<comment type="similarity">
    <text evidence="1">Belongs to the acyl carrier protein (ACP) family.</text>
</comment>
<keyword id="KW-0963">Cytoplasm</keyword>
<keyword id="KW-0275">Fatty acid biosynthesis</keyword>
<keyword id="KW-0276">Fatty acid metabolism</keyword>
<keyword id="KW-0444">Lipid biosynthesis</keyword>
<keyword id="KW-0443">Lipid metabolism</keyword>
<keyword id="KW-0596">Phosphopantetheine</keyword>
<keyword id="KW-0597">Phosphoprotein</keyword>
<feature type="chain" id="PRO_1000066705" description="Acyl carrier protein">
    <location>
        <begin position="1"/>
        <end position="81"/>
    </location>
</feature>
<feature type="domain" description="Carrier" evidence="2">
    <location>
        <begin position="4"/>
        <end position="79"/>
    </location>
</feature>
<feature type="modified residue" description="O-(pantetheine 4'-phosphoryl)serine" evidence="2">
    <location>
        <position position="39"/>
    </location>
</feature>
<gene>
    <name evidence="1" type="primary">acpP</name>
    <name type="ordered locus">CYA_2874</name>
</gene>
<dbReference type="EMBL" id="CP000239">
    <property type="protein sequence ID" value="ABD00974.1"/>
    <property type="molecule type" value="Genomic_DNA"/>
</dbReference>
<dbReference type="RefSeq" id="WP_011431644.1">
    <property type="nucleotide sequence ID" value="NC_007775.1"/>
</dbReference>
<dbReference type="SMR" id="Q2JQZ8"/>
<dbReference type="STRING" id="321327.CYA_2874"/>
<dbReference type="KEGG" id="cya:CYA_2874"/>
<dbReference type="eggNOG" id="COG0236">
    <property type="taxonomic scope" value="Bacteria"/>
</dbReference>
<dbReference type="HOGENOM" id="CLU_108696_5_1_3"/>
<dbReference type="OrthoDB" id="9804551at2"/>
<dbReference type="UniPathway" id="UPA00094"/>
<dbReference type="Proteomes" id="UP000008818">
    <property type="component" value="Chromosome"/>
</dbReference>
<dbReference type="GO" id="GO:0005829">
    <property type="term" value="C:cytosol"/>
    <property type="evidence" value="ECO:0007669"/>
    <property type="project" value="TreeGrafter"/>
</dbReference>
<dbReference type="GO" id="GO:0016020">
    <property type="term" value="C:membrane"/>
    <property type="evidence" value="ECO:0007669"/>
    <property type="project" value="GOC"/>
</dbReference>
<dbReference type="GO" id="GO:0000035">
    <property type="term" value="F:acyl binding"/>
    <property type="evidence" value="ECO:0007669"/>
    <property type="project" value="TreeGrafter"/>
</dbReference>
<dbReference type="GO" id="GO:0000036">
    <property type="term" value="F:acyl carrier activity"/>
    <property type="evidence" value="ECO:0007669"/>
    <property type="project" value="UniProtKB-UniRule"/>
</dbReference>
<dbReference type="GO" id="GO:0009245">
    <property type="term" value="P:lipid A biosynthetic process"/>
    <property type="evidence" value="ECO:0007669"/>
    <property type="project" value="TreeGrafter"/>
</dbReference>
<dbReference type="FunFam" id="1.10.1200.10:FF:000001">
    <property type="entry name" value="Acyl carrier protein"/>
    <property type="match status" value="1"/>
</dbReference>
<dbReference type="Gene3D" id="1.10.1200.10">
    <property type="entry name" value="ACP-like"/>
    <property type="match status" value="1"/>
</dbReference>
<dbReference type="HAMAP" id="MF_01217">
    <property type="entry name" value="Acyl_carrier"/>
    <property type="match status" value="1"/>
</dbReference>
<dbReference type="InterPro" id="IPR003231">
    <property type="entry name" value="ACP"/>
</dbReference>
<dbReference type="InterPro" id="IPR036736">
    <property type="entry name" value="ACP-like_sf"/>
</dbReference>
<dbReference type="InterPro" id="IPR009081">
    <property type="entry name" value="PP-bd_ACP"/>
</dbReference>
<dbReference type="InterPro" id="IPR006162">
    <property type="entry name" value="Ppantetheine_attach_site"/>
</dbReference>
<dbReference type="NCBIfam" id="TIGR00517">
    <property type="entry name" value="acyl_carrier"/>
    <property type="match status" value="1"/>
</dbReference>
<dbReference type="NCBIfam" id="NF002148">
    <property type="entry name" value="PRK00982.1-2"/>
    <property type="match status" value="1"/>
</dbReference>
<dbReference type="NCBIfam" id="NF002149">
    <property type="entry name" value="PRK00982.1-3"/>
    <property type="match status" value="1"/>
</dbReference>
<dbReference type="NCBIfam" id="NF002150">
    <property type="entry name" value="PRK00982.1-4"/>
    <property type="match status" value="1"/>
</dbReference>
<dbReference type="NCBIfam" id="NF002151">
    <property type="entry name" value="PRK00982.1-5"/>
    <property type="match status" value="1"/>
</dbReference>
<dbReference type="NCBIfam" id="NF009104">
    <property type="entry name" value="PRK12449.1"/>
    <property type="match status" value="1"/>
</dbReference>
<dbReference type="PANTHER" id="PTHR20863">
    <property type="entry name" value="ACYL CARRIER PROTEIN"/>
    <property type="match status" value="1"/>
</dbReference>
<dbReference type="PANTHER" id="PTHR20863:SF76">
    <property type="entry name" value="CARRIER DOMAIN-CONTAINING PROTEIN"/>
    <property type="match status" value="1"/>
</dbReference>
<dbReference type="Pfam" id="PF00550">
    <property type="entry name" value="PP-binding"/>
    <property type="match status" value="1"/>
</dbReference>
<dbReference type="SUPFAM" id="SSF47336">
    <property type="entry name" value="ACP-like"/>
    <property type="match status" value="1"/>
</dbReference>
<dbReference type="PROSITE" id="PS50075">
    <property type="entry name" value="CARRIER"/>
    <property type="match status" value="1"/>
</dbReference>
<dbReference type="PROSITE" id="PS00012">
    <property type="entry name" value="PHOSPHOPANTETHEINE"/>
    <property type="match status" value="1"/>
</dbReference>
<proteinExistence type="inferred from homology"/>
<evidence type="ECO:0000255" key="1">
    <source>
        <dbReference type="HAMAP-Rule" id="MF_01217"/>
    </source>
</evidence>
<evidence type="ECO:0000255" key="2">
    <source>
        <dbReference type="PROSITE-ProRule" id="PRU00258"/>
    </source>
</evidence>